<name>RK121_ARATH</name>
<gene>
    <name type="primary">RPL12A</name>
    <name type="ordered locus">At3g27830</name>
    <name type="ORF">K16N12.4</name>
</gene>
<evidence type="ECO:0000255" key="1"/>
<evidence type="ECO:0000303" key="2">
    <source>
    </source>
</evidence>
<evidence type="ECO:0000305" key="3"/>
<dbReference type="EMBL" id="X68046">
    <property type="protein sequence ID" value="CAA48181.1"/>
    <property type="molecule type" value="Genomic_DNA"/>
</dbReference>
<dbReference type="EMBL" id="AP000371">
    <property type="protein sequence ID" value="BAB02529.1"/>
    <property type="molecule type" value="Genomic_DNA"/>
</dbReference>
<dbReference type="EMBL" id="CP002686">
    <property type="protein sequence ID" value="AEE77368.1"/>
    <property type="molecule type" value="Genomic_DNA"/>
</dbReference>
<dbReference type="EMBL" id="CP002686">
    <property type="protein sequence ID" value="ANM64733.1"/>
    <property type="molecule type" value="Genomic_DNA"/>
</dbReference>
<dbReference type="EMBL" id="AY054567">
    <property type="protein sequence ID" value="AAK96758.1"/>
    <property type="molecule type" value="mRNA"/>
</dbReference>
<dbReference type="EMBL" id="AY056124">
    <property type="protein sequence ID" value="AAL07203.1"/>
    <property type="molecule type" value="mRNA"/>
</dbReference>
<dbReference type="EMBL" id="AY136308">
    <property type="protein sequence ID" value="AAM96974.1"/>
    <property type="molecule type" value="mRNA"/>
</dbReference>
<dbReference type="EMBL" id="BT000419">
    <property type="protein sequence ID" value="AAN15738.1"/>
    <property type="molecule type" value="mRNA"/>
</dbReference>
<dbReference type="EMBL" id="BT006058">
    <property type="protein sequence ID" value="AAP04043.1"/>
    <property type="molecule type" value="mRNA"/>
</dbReference>
<dbReference type="EMBL" id="BT006568">
    <property type="protein sequence ID" value="AAP21376.1"/>
    <property type="molecule type" value="mRNA"/>
</dbReference>
<dbReference type="EMBL" id="Z17719">
    <property type="protein sequence ID" value="CAA79044.1"/>
    <property type="molecule type" value="mRNA"/>
</dbReference>
<dbReference type="PIR" id="A53394">
    <property type="entry name" value="A53394"/>
</dbReference>
<dbReference type="SMR" id="P36210"/>
<dbReference type="BioGRID" id="7733">
    <property type="interactions" value="7"/>
</dbReference>
<dbReference type="FunCoup" id="P36210">
    <property type="interactions" value="794"/>
</dbReference>
<dbReference type="IntAct" id="P36210">
    <property type="interactions" value="1"/>
</dbReference>
<dbReference type="STRING" id="3702.P36210"/>
<dbReference type="iPTMnet" id="P36210"/>
<dbReference type="PaxDb" id="3702-AT3G27830.1"/>
<dbReference type="ProteomicsDB" id="226840"/>
<dbReference type="EnsemblPlants" id="AT3G27830.1">
    <property type="protein sequence ID" value="AT3G27830.1"/>
    <property type="gene ID" value="AT3G27830"/>
</dbReference>
<dbReference type="EnsemblPlants" id="AT3G27830.2">
    <property type="protein sequence ID" value="AT3G27830.2"/>
    <property type="gene ID" value="AT3G27830"/>
</dbReference>
<dbReference type="Gramene" id="AT3G27830.1">
    <property type="protein sequence ID" value="AT3G27830.1"/>
    <property type="gene ID" value="AT3G27830"/>
</dbReference>
<dbReference type="Gramene" id="AT3G27830.2">
    <property type="protein sequence ID" value="AT3G27830.2"/>
    <property type="gene ID" value="AT3G27830"/>
</dbReference>
<dbReference type="KEGG" id="ath:AT3G27830"/>
<dbReference type="Araport" id="AT3G27830"/>
<dbReference type="TAIR" id="AT3G27830">
    <property type="gene designation" value="RPL12-A"/>
</dbReference>
<dbReference type="eggNOG" id="KOG1715">
    <property type="taxonomic scope" value="Eukaryota"/>
</dbReference>
<dbReference type="HOGENOM" id="CLU_086499_1_2_1"/>
<dbReference type="InParanoid" id="P36210"/>
<dbReference type="OMA" id="LEDKWGV"/>
<dbReference type="PhylomeDB" id="P36210"/>
<dbReference type="CD-CODE" id="4299E36E">
    <property type="entry name" value="Nucleolus"/>
</dbReference>
<dbReference type="PRO" id="PR:P36210"/>
<dbReference type="Proteomes" id="UP000006548">
    <property type="component" value="Chromosome 3"/>
</dbReference>
<dbReference type="ExpressionAtlas" id="P36210">
    <property type="expression patterns" value="baseline and differential"/>
</dbReference>
<dbReference type="GO" id="GO:0009507">
    <property type="term" value="C:chloroplast"/>
    <property type="evidence" value="ECO:0007005"/>
    <property type="project" value="TAIR"/>
</dbReference>
<dbReference type="GO" id="GO:0009941">
    <property type="term" value="C:chloroplast envelope"/>
    <property type="evidence" value="ECO:0007005"/>
    <property type="project" value="TAIR"/>
</dbReference>
<dbReference type="GO" id="GO:0042644">
    <property type="term" value="C:chloroplast nucleoid"/>
    <property type="evidence" value="ECO:0007005"/>
    <property type="project" value="TAIR"/>
</dbReference>
<dbReference type="GO" id="GO:0009570">
    <property type="term" value="C:chloroplast stroma"/>
    <property type="evidence" value="ECO:0007005"/>
    <property type="project" value="TAIR"/>
</dbReference>
<dbReference type="GO" id="GO:0009535">
    <property type="term" value="C:chloroplast thylakoid membrane"/>
    <property type="evidence" value="ECO:0007005"/>
    <property type="project" value="TAIR"/>
</dbReference>
<dbReference type="GO" id="GO:0005829">
    <property type="term" value="C:cytosol"/>
    <property type="evidence" value="ECO:0007005"/>
    <property type="project" value="TAIR"/>
</dbReference>
<dbReference type="GO" id="GO:0009506">
    <property type="term" value="C:plasmodesma"/>
    <property type="evidence" value="ECO:0007005"/>
    <property type="project" value="TAIR"/>
</dbReference>
<dbReference type="GO" id="GO:0000311">
    <property type="term" value="C:plastid large ribosomal subunit"/>
    <property type="evidence" value="ECO:0000250"/>
    <property type="project" value="TAIR"/>
</dbReference>
<dbReference type="GO" id="GO:0009579">
    <property type="term" value="C:thylakoid"/>
    <property type="evidence" value="ECO:0007005"/>
    <property type="project" value="TAIR"/>
</dbReference>
<dbReference type="GO" id="GO:0003729">
    <property type="term" value="F:mRNA binding"/>
    <property type="evidence" value="ECO:0000314"/>
    <property type="project" value="TAIR"/>
</dbReference>
<dbReference type="GO" id="GO:0003735">
    <property type="term" value="F:structural constituent of ribosome"/>
    <property type="evidence" value="ECO:0007669"/>
    <property type="project" value="InterPro"/>
</dbReference>
<dbReference type="GO" id="GO:0006412">
    <property type="term" value="P:translation"/>
    <property type="evidence" value="ECO:0000304"/>
    <property type="project" value="TAIR"/>
</dbReference>
<dbReference type="CDD" id="cd00387">
    <property type="entry name" value="Ribosomal_L7_L12"/>
    <property type="match status" value="1"/>
</dbReference>
<dbReference type="FunFam" id="3.30.1390.10:FF:000001">
    <property type="entry name" value="50S ribosomal protein L7/L12"/>
    <property type="match status" value="1"/>
</dbReference>
<dbReference type="FunFam" id="1.20.5.710:FF:000009">
    <property type="entry name" value="Ribosomal protein L12-B"/>
    <property type="match status" value="1"/>
</dbReference>
<dbReference type="Gene3D" id="3.30.1390.10">
    <property type="match status" value="1"/>
</dbReference>
<dbReference type="Gene3D" id="1.20.5.710">
    <property type="entry name" value="Single helix bin"/>
    <property type="match status" value="1"/>
</dbReference>
<dbReference type="HAMAP" id="MF_00368">
    <property type="entry name" value="Ribosomal_bL12"/>
    <property type="match status" value="1"/>
</dbReference>
<dbReference type="InterPro" id="IPR000206">
    <property type="entry name" value="Ribosomal_bL12"/>
</dbReference>
<dbReference type="InterPro" id="IPR013823">
    <property type="entry name" value="Ribosomal_bL12_C"/>
</dbReference>
<dbReference type="InterPro" id="IPR014719">
    <property type="entry name" value="Ribosomal_bL12_C/ClpS-like"/>
</dbReference>
<dbReference type="InterPro" id="IPR008932">
    <property type="entry name" value="Ribosomal_bL12_oligo"/>
</dbReference>
<dbReference type="InterPro" id="IPR036235">
    <property type="entry name" value="Ribosomal_bL12_oligo_N_sf"/>
</dbReference>
<dbReference type="NCBIfam" id="TIGR00855">
    <property type="entry name" value="L12"/>
    <property type="match status" value="1"/>
</dbReference>
<dbReference type="PANTHER" id="PTHR45987">
    <property type="entry name" value="39S RIBOSOMAL PROTEIN L12"/>
    <property type="match status" value="1"/>
</dbReference>
<dbReference type="PANTHER" id="PTHR45987:SF26">
    <property type="entry name" value="LARGE RIBOSOMAL SUBUNIT PROTEIN BL12CX-RELATED"/>
    <property type="match status" value="1"/>
</dbReference>
<dbReference type="Pfam" id="PF00542">
    <property type="entry name" value="Ribosomal_L12"/>
    <property type="match status" value="1"/>
</dbReference>
<dbReference type="Pfam" id="PF16320">
    <property type="entry name" value="Ribosomal_L12_N"/>
    <property type="match status" value="1"/>
</dbReference>
<dbReference type="SUPFAM" id="SSF54736">
    <property type="entry name" value="ClpS-like"/>
    <property type="match status" value="1"/>
</dbReference>
<dbReference type="SUPFAM" id="SSF48300">
    <property type="entry name" value="Ribosomal protein L7/12, oligomerisation (N-terminal) domain"/>
    <property type="match status" value="1"/>
</dbReference>
<proteinExistence type="evidence at transcript level"/>
<protein>
    <recommendedName>
        <fullName evidence="2">Large ribosomal subunit protein bL12cz</fullName>
    </recommendedName>
    <alternativeName>
        <fullName>50S ribosomal protein L12-1, chloroplastic</fullName>
    </alternativeName>
    <alternativeName>
        <fullName>CL12-A</fullName>
    </alternativeName>
</protein>
<accession>P36210</accession>
<sequence length="191" mass="20075">MASTTLSIATTIRSSSYPTLASINHFPSRTTTIEFPSRFGGGSSSTLTHRATHLRPIAAVEAPEKIEKIGSEISSLTLEEARILVDYLQDKFGVSPLSLAPAAAAVAAPADGGAAAVVEEQTEFDVVINEVPSSSRIAVIKAVRALTSLALKEAKELIEGLPKKFKEGITKDEAEEAKKTLEEAGAKVSIA</sequence>
<reference key="1">
    <citation type="journal article" date="1994" name="J. Biol. Chem.">
        <title>Multicopy GTPase center protein L12 of Arabidopsis chloroplast ribosome is encoded by a clustered nuclear gene family with the expressed members closely linked to tRNA(Pro) genes.</title>
        <authorList>
            <person name="Wegloehner W."/>
            <person name="Subramanian A.R."/>
        </authorList>
    </citation>
    <scope>NUCLEOTIDE SEQUENCE [GENOMIC DNA]</scope>
    <source>
        <strain>cv. Landsberg erecta</strain>
    </source>
</reference>
<reference key="2">
    <citation type="journal article" date="2000" name="DNA Res.">
        <title>Structural analysis of Arabidopsis thaliana chromosome 3. II. Sequence features of the 4,251,695 bp regions covered by 90 P1, TAC and BAC clones.</title>
        <authorList>
            <person name="Kaneko T."/>
            <person name="Katoh T."/>
            <person name="Sato S."/>
            <person name="Nakamura Y."/>
            <person name="Asamizu E."/>
            <person name="Tabata S."/>
        </authorList>
    </citation>
    <scope>NUCLEOTIDE SEQUENCE [LARGE SCALE GENOMIC DNA]</scope>
    <source>
        <strain>cv. Columbia</strain>
    </source>
</reference>
<reference key="3">
    <citation type="journal article" date="2017" name="Plant J.">
        <title>Araport11: a complete reannotation of the Arabidopsis thaliana reference genome.</title>
        <authorList>
            <person name="Cheng C.Y."/>
            <person name="Krishnakumar V."/>
            <person name="Chan A.P."/>
            <person name="Thibaud-Nissen F."/>
            <person name="Schobel S."/>
            <person name="Town C.D."/>
        </authorList>
    </citation>
    <scope>GENOME REANNOTATION</scope>
    <source>
        <strain>cv. Columbia</strain>
    </source>
</reference>
<reference key="4">
    <citation type="journal article" date="2003" name="Science">
        <title>Empirical analysis of transcriptional activity in the Arabidopsis genome.</title>
        <authorList>
            <person name="Yamada K."/>
            <person name="Lim J."/>
            <person name="Dale J.M."/>
            <person name="Chen H."/>
            <person name="Shinn P."/>
            <person name="Palm C.J."/>
            <person name="Southwick A.M."/>
            <person name="Wu H.C."/>
            <person name="Kim C.J."/>
            <person name="Nguyen M."/>
            <person name="Pham P.K."/>
            <person name="Cheuk R.F."/>
            <person name="Karlin-Newmann G."/>
            <person name="Liu S.X."/>
            <person name="Lam B."/>
            <person name="Sakano H."/>
            <person name="Wu T."/>
            <person name="Yu G."/>
            <person name="Miranda M."/>
            <person name="Quach H.L."/>
            <person name="Tripp M."/>
            <person name="Chang C.H."/>
            <person name="Lee J.M."/>
            <person name="Toriumi M.J."/>
            <person name="Chan M.M."/>
            <person name="Tang C.C."/>
            <person name="Onodera C.S."/>
            <person name="Deng J.M."/>
            <person name="Akiyama K."/>
            <person name="Ansari Y."/>
            <person name="Arakawa T."/>
            <person name="Banh J."/>
            <person name="Banno F."/>
            <person name="Bowser L."/>
            <person name="Brooks S.Y."/>
            <person name="Carninci P."/>
            <person name="Chao Q."/>
            <person name="Choy N."/>
            <person name="Enju A."/>
            <person name="Goldsmith A.D."/>
            <person name="Gurjal M."/>
            <person name="Hansen N.F."/>
            <person name="Hayashizaki Y."/>
            <person name="Johnson-Hopson C."/>
            <person name="Hsuan V.W."/>
            <person name="Iida K."/>
            <person name="Karnes M."/>
            <person name="Khan S."/>
            <person name="Koesema E."/>
            <person name="Ishida J."/>
            <person name="Jiang P.X."/>
            <person name="Jones T."/>
            <person name="Kawai J."/>
            <person name="Kamiya A."/>
            <person name="Meyers C."/>
            <person name="Nakajima M."/>
            <person name="Narusaka M."/>
            <person name="Seki M."/>
            <person name="Sakurai T."/>
            <person name="Satou M."/>
            <person name="Tamse R."/>
            <person name="Vaysberg M."/>
            <person name="Wallender E.K."/>
            <person name="Wong C."/>
            <person name="Yamamura Y."/>
            <person name="Yuan S."/>
            <person name="Shinozaki K."/>
            <person name="Davis R.W."/>
            <person name="Theologis A."/>
            <person name="Ecker J.R."/>
        </authorList>
    </citation>
    <scope>NUCLEOTIDE SEQUENCE [LARGE SCALE MRNA]</scope>
    <source>
        <strain>cv. Columbia</strain>
    </source>
</reference>
<reference key="5">
    <citation type="journal article" date="1993" name="Plant J.">
        <title>An inventory of 1152 expressed sequence tags obtained by partial sequencing of cDNAs from Arabidopsis thaliana.</title>
        <authorList>
            <person name="Hoefte H."/>
            <person name="Desprez T."/>
            <person name="Amselem J."/>
            <person name="Chiapello H."/>
            <person name="Rouze P."/>
            <person name="Caboche M."/>
            <person name="Moisan A."/>
            <person name="Jourjon M.-F."/>
            <person name="Charpenteau J.-L."/>
            <person name="Berthomieu P."/>
            <person name="Guerrier D."/>
            <person name="Giraudat J."/>
            <person name="Quigley F."/>
            <person name="Thomas F."/>
            <person name="Yu D.-Y."/>
            <person name="Mache R."/>
            <person name="Raynal M."/>
            <person name="Cooke R."/>
            <person name="Grellet F."/>
            <person name="Delseny M."/>
            <person name="Parmentier Y."/>
            <person name="de Marcillac G."/>
            <person name="Gigot C."/>
            <person name="Fleck J."/>
            <person name="Philipps G."/>
            <person name="Axelos M."/>
            <person name="Bardet C."/>
            <person name="Tremousaygue D."/>
            <person name="Lescure B."/>
        </authorList>
    </citation>
    <scope>NUCLEOTIDE SEQUENCE [LARGE SCALE MRNA] OF 1-163</scope>
    <source>
        <strain>cv. Columbia</strain>
        <tissue>Green siliques</tissue>
    </source>
</reference>
<reference key="6">
    <citation type="journal article" date="2023" name="Plant Cell">
        <title>An updated nomenclature for plant ribosomal protein genes.</title>
        <authorList>
            <person name="Scarpin M.R."/>
            <person name="Busche M."/>
            <person name="Martinez R.E."/>
            <person name="Harper L.C."/>
            <person name="Reiser L."/>
            <person name="Szakonyi D."/>
            <person name="Merchante C."/>
            <person name="Lan T."/>
            <person name="Xiong W."/>
            <person name="Mo B."/>
            <person name="Tang G."/>
            <person name="Chen X."/>
            <person name="Bailey-Serres J."/>
            <person name="Browning K.S."/>
            <person name="Brunkard J.O."/>
        </authorList>
    </citation>
    <scope>NOMENCLATURE</scope>
</reference>
<feature type="transit peptide" description="Chloroplast" evidence="1">
    <location>
        <begin position="1"/>
        <end position="58"/>
    </location>
</feature>
<feature type="chain" id="PRO_0000030448" description="Large ribosomal subunit protein bL12cz">
    <location>
        <begin position="59"/>
        <end position="191"/>
    </location>
</feature>
<feature type="sequence conflict" description="In Ref. 5; CAA79044." evidence="3" ref="5">
    <original>P</original>
    <variation>A</variation>
    <location>
        <position position="96"/>
    </location>
</feature>
<feature type="sequence conflict" description="In Ref. 5; CAA79044." evidence="3" ref="5">
    <original>I</original>
    <variation>T</variation>
    <location>
        <position position="137"/>
    </location>
</feature>
<keyword id="KW-0150">Chloroplast</keyword>
<keyword id="KW-0934">Plastid</keyword>
<keyword id="KW-1185">Reference proteome</keyword>
<keyword id="KW-0687">Ribonucleoprotein</keyword>
<keyword id="KW-0689">Ribosomal protein</keyword>
<keyword id="KW-0809">Transit peptide</keyword>
<comment type="subcellular location">
    <subcellularLocation>
        <location>Plastid</location>
        <location>Chloroplast</location>
    </subcellularLocation>
</comment>
<comment type="similarity">
    <text evidence="3">Belongs to the bacterial ribosomal protein bL12 family.</text>
</comment>
<organism>
    <name type="scientific">Arabidopsis thaliana</name>
    <name type="common">Mouse-ear cress</name>
    <dbReference type="NCBI Taxonomy" id="3702"/>
    <lineage>
        <taxon>Eukaryota</taxon>
        <taxon>Viridiplantae</taxon>
        <taxon>Streptophyta</taxon>
        <taxon>Embryophyta</taxon>
        <taxon>Tracheophyta</taxon>
        <taxon>Spermatophyta</taxon>
        <taxon>Magnoliopsida</taxon>
        <taxon>eudicotyledons</taxon>
        <taxon>Gunneridae</taxon>
        <taxon>Pentapetalae</taxon>
        <taxon>rosids</taxon>
        <taxon>malvids</taxon>
        <taxon>Brassicales</taxon>
        <taxon>Brassicaceae</taxon>
        <taxon>Camelineae</taxon>
        <taxon>Arabidopsis</taxon>
    </lineage>
</organism>